<gene>
    <name evidence="1" type="primary">rph</name>
    <name type="ordered locus">PA14_70420</name>
</gene>
<accession>Q02E28</accession>
<name>RNPH_PSEAB</name>
<reference key="1">
    <citation type="journal article" date="2006" name="Genome Biol.">
        <title>Genomic analysis reveals that Pseudomonas aeruginosa virulence is combinatorial.</title>
        <authorList>
            <person name="Lee D.G."/>
            <person name="Urbach J.M."/>
            <person name="Wu G."/>
            <person name="Liberati N.T."/>
            <person name="Feinbaum R.L."/>
            <person name="Miyata S."/>
            <person name="Diggins L.T."/>
            <person name="He J."/>
            <person name="Saucier M."/>
            <person name="Deziel E."/>
            <person name="Friedman L."/>
            <person name="Li L."/>
            <person name="Grills G."/>
            <person name="Montgomery K."/>
            <person name="Kucherlapati R."/>
            <person name="Rahme L.G."/>
            <person name="Ausubel F.M."/>
        </authorList>
    </citation>
    <scope>NUCLEOTIDE SEQUENCE [LARGE SCALE GENOMIC DNA]</scope>
    <source>
        <strain>UCBPP-PA14</strain>
    </source>
</reference>
<sequence>MNRPSGRAADQLRPIRITRHYTKHAEGSVLVEFGDTKVICTVSAESGVPRFLKGQGQGWLTAEYGMLPRSTGERNQREASRGKQGGRTLEIQRLIGRSLRAALDLSKLGENTLYIDCDVIQADGGTRTASITGATVALIDALAVLKKRGALKGNPLKQMVAAVSVGIYQGVPVLDLDYLEDSAAETDLNVVMTDAGGFIEVQGTAEGAPFRPAELNAMLELAQQGMQELFELQRAALAE</sequence>
<protein>
    <recommendedName>
        <fullName evidence="1">Ribonuclease PH</fullName>
        <shortName evidence="1">RNase PH</shortName>
        <ecNumber evidence="1">2.7.7.56</ecNumber>
    </recommendedName>
    <alternativeName>
        <fullName evidence="1">tRNA nucleotidyltransferase</fullName>
    </alternativeName>
</protein>
<comment type="function">
    <text evidence="1">Phosphorolytic 3'-5' exoribonuclease that plays an important role in tRNA 3'-end maturation. Removes nucleotide residues following the 3'-CCA terminus of tRNAs; can also add nucleotides to the ends of RNA molecules by using nucleoside diphosphates as substrates, but this may not be physiologically important. Probably plays a role in initiation of 16S rRNA degradation (leading to ribosome degradation) during starvation.</text>
</comment>
<comment type="catalytic activity">
    <reaction evidence="1">
        <text>tRNA(n+1) + phosphate = tRNA(n) + a ribonucleoside 5'-diphosphate</text>
        <dbReference type="Rhea" id="RHEA:10628"/>
        <dbReference type="Rhea" id="RHEA-COMP:17343"/>
        <dbReference type="Rhea" id="RHEA-COMP:17344"/>
        <dbReference type="ChEBI" id="CHEBI:43474"/>
        <dbReference type="ChEBI" id="CHEBI:57930"/>
        <dbReference type="ChEBI" id="CHEBI:173114"/>
        <dbReference type="EC" id="2.7.7.56"/>
    </reaction>
</comment>
<comment type="subunit">
    <text evidence="1">Homohexameric ring arranged as a trimer of dimers.</text>
</comment>
<comment type="similarity">
    <text evidence="1">Belongs to the RNase PH family.</text>
</comment>
<organism>
    <name type="scientific">Pseudomonas aeruginosa (strain UCBPP-PA14)</name>
    <dbReference type="NCBI Taxonomy" id="208963"/>
    <lineage>
        <taxon>Bacteria</taxon>
        <taxon>Pseudomonadati</taxon>
        <taxon>Pseudomonadota</taxon>
        <taxon>Gammaproteobacteria</taxon>
        <taxon>Pseudomonadales</taxon>
        <taxon>Pseudomonadaceae</taxon>
        <taxon>Pseudomonas</taxon>
    </lineage>
</organism>
<keyword id="KW-0548">Nucleotidyltransferase</keyword>
<keyword id="KW-0694">RNA-binding</keyword>
<keyword id="KW-0698">rRNA processing</keyword>
<keyword id="KW-0808">Transferase</keyword>
<keyword id="KW-0819">tRNA processing</keyword>
<keyword id="KW-0820">tRNA-binding</keyword>
<feature type="chain" id="PRO_1000024848" description="Ribonuclease PH">
    <location>
        <begin position="1"/>
        <end position="239"/>
    </location>
</feature>
<feature type="binding site" evidence="1">
    <location>
        <position position="87"/>
    </location>
    <ligand>
        <name>phosphate</name>
        <dbReference type="ChEBI" id="CHEBI:43474"/>
        <note>substrate</note>
    </ligand>
</feature>
<feature type="binding site" evidence="1">
    <location>
        <begin position="125"/>
        <end position="127"/>
    </location>
    <ligand>
        <name>phosphate</name>
        <dbReference type="ChEBI" id="CHEBI:43474"/>
        <note>substrate</note>
    </ligand>
</feature>
<proteinExistence type="inferred from homology"/>
<dbReference type="EC" id="2.7.7.56" evidence="1"/>
<dbReference type="EMBL" id="CP000438">
    <property type="protein sequence ID" value="ABJ14717.1"/>
    <property type="molecule type" value="Genomic_DNA"/>
</dbReference>
<dbReference type="RefSeq" id="WP_003096595.1">
    <property type="nucleotide sequence ID" value="NZ_CP034244.1"/>
</dbReference>
<dbReference type="SMR" id="Q02E28"/>
<dbReference type="GeneID" id="77223865"/>
<dbReference type="KEGG" id="pau:PA14_70420"/>
<dbReference type="PseudoCAP" id="PA14_70420"/>
<dbReference type="HOGENOM" id="CLU_050858_0_0_6"/>
<dbReference type="BioCyc" id="PAER208963:G1G74-5927-MONOMER"/>
<dbReference type="Proteomes" id="UP000000653">
    <property type="component" value="Chromosome"/>
</dbReference>
<dbReference type="GO" id="GO:0000175">
    <property type="term" value="F:3'-5'-RNA exonuclease activity"/>
    <property type="evidence" value="ECO:0007669"/>
    <property type="project" value="UniProtKB-UniRule"/>
</dbReference>
<dbReference type="GO" id="GO:0000049">
    <property type="term" value="F:tRNA binding"/>
    <property type="evidence" value="ECO:0007669"/>
    <property type="project" value="UniProtKB-UniRule"/>
</dbReference>
<dbReference type="GO" id="GO:0009022">
    <property type="term" value="F:tRNA nucleotidyltransferase activity"/>
    <property type="evidence" value="ECO:0007669"/>
    <property type="project" value="UniProtKB-UniRule"/>
</dbReference>
<dbReference type="GO" id="GO:0016075">
    <property type="term" value="P:rRNA catabolic process"/>
    <property type="evidence" value="ECO:0007669"/>
    <property type="project" value="UniProtKB-UniRule"/>
</dbReference>
<dbReference type="GO" id="GO:0006364">
    <property type="term" value="P:rRNA processing"/>
    <property type="evidence" value="ECO:0007669"/>
    <property type="project" value="UniProtKB-KW"/>
</dbReference>
<dbReference type="GO" id="GO:0008033">
    <property type="term" value="P:tRNA processing"/>
    <property type="evidence" value="ECO:0007669"/>
    <property type="project" value="UniProtKB-UniRule"/>
</dbReference>
<dbReference type="CDD" id="cd11362">
    <property type="entry name" value="RNase_PH_bact"/>
    <property type="match status" value="1"/>
</dbReference>
<dbReference type="FunFam" id="3.30.230.70:FF:000003">
    <property type="entry name" value="Ribonuclease PH"/>
    <property type="match status" value="1"/>
</dbReference>
<dbReference type="Gene3D" id="3.30.230.70">
    <property type="entry name" value="GHMP Kinase, N-terminal domain"/>
    <property type="match status" value="1"/>
</dbReference>
<dbReference type="HAMAP" id="MF_00564">
    <property type="entry name" value="RNase_PH"/>
    <property type="match status" value="1"/>
</dbReference>
<dbReference type="InterPro" id="IPR001247">
    <property type="entry name" value="ExoRNase_PH_dom1"/>
</dbReference>
<dbReference type="InterPro" id="IPR015847">
    <property type="entry name" value="ExoRNase_PH_dom2"/>
</dbReference>
<dbReference type="InterPro" id="IPR036345">
    <property type="entry name" value="ExoRNase_PH_dom2_sf"/>
</dbReference>
<dbReference type="InterPro" id="IPR027408">
    <property type="entry name" value="PNPase/RNase_PH_dom_sf"/>
</dbReference>
<dbReference type="InterPro" id="IPR020568">
    <property type="entry name" value="Ribosomal_Su5_D2-typ_SF"/>
</dbReference>
<dbReference type="InterPro" id="IPR050080">
    <property type="entry name" value="RNase_PH"/>
</dbReference>
<dbReference type="InterPro" id="IPR002381">
    <property type="entry name" value="RNase_PH_bac-type"/>
</dbReference>
<dbReference type="InterPro" id="IPR018336">
    <property type="entry name" value="RNase_PH_CS"/>
</dbReference>
<dbReference type="NCBIfam" id="TIGR01966">
    <property type="entry name" value="RNasePH"/>
    <property type="match status" value="1"/>
</dbReference>
<dbReference type="PANTHER" id="PTHR11953">
    <property type="entry name" value="EXOSOME COMPLEX COMPONENT"/>
    <property type="match status" value="1"/>
</dbReference>
<dbReference type="PANTHER" id="PTHR11953:SF0">
    <property type="entry name" value="EXOSOME COMPLEX COMPONENT RRP41"/>
    <property type="match status" value="1"/>
</dbReference>
<dbReference type="Pfam" id="PF01138">
    <property type="entry name" value="RNase_PH"/>
    <property type="match status" value="1"/>
</dbReference>
<dbReference type="Pfam" id="PF03725">
    <property type="entry name" value="RNase_PH_C"/>
    <property type="match status" value="1"/>
</dbReference>
<dbReference type="SUPFAM" id="SSF55666">
    <property type="entry name" value="Ribonuclease PH domain 2-like"/>
    <property type="match status" value="1"/>
</dbReference>
<dbReference type="SUPFAM" id="SSF54211">
    <property type="entry name" value="Ribosomal protein S5 domain 2-like"/>
    <property type="match status" value="1"/>
</dbReference>
<dbReference type="PROSITE" id="PS01277">
    <property type="entry name" value="RIBONUCLEASE_PH"/>
    <property type="match status" value="1"/>
</dbReference>
<evidence type="ECO:0000255" key="1">
    <source>
        <dbReference type="HAMAP-Rule" id="MF_00564"/>
    </source>
</evidence>